<dbReference type="EMBL" id="AY178864">
    <property type="protein sequence ID" value="AAP29405.2"/>
    <property type="molecule type" value="Genomic_DNA"/>
</dbReference>
<dbReference type="RefSeq" id="NP_848074.2">
    <property type="nucleotide sequence ID" value="NC_004766.1"/>
</dbReference>
<dbReference type="SMR" id="Q85FK8"/>
<dbReference type="GeneID" id="807464"/>
<dbReference type="GO" id="GO:0009535">
    <property type="term" value="C:chloroplast thylakoid membrane"/>
    <property type="evidence" value="ECO:0007669"/>
    <property type="project" value="UniProtKB-SubCell"/>
</dbReference>
<dbReference type="GO" id="GO:0009539">
    <property type="term" value="C:photosystem II reaction center"/>
    <property type="evidence" value="ECO:0007669"/>
    <property type="project" value="InterPro"/>
</dbReference>
<dbReference type="GO" id="GO:0015979">
    <property type="term" value="P:photosynthesis"/>
    <property type="evidence" value="ECO:0007669"/>
    <property type="project" value="UniProtKB-UniRule"/>
</dbReference>
<dbReference type="Gene3D" id="6.10.250.2070">
    <property type="match status" value="1"/>
</dbReference>
<dbReference type="HAMAP" id="MF_01305">
    <property type="entry name" value="PSII_PsbJ"/>
    <property type="match status" value="1"/>
</dbReference>
<dbReference type="InterPro" id="IPR002682">
    <property type="entry name" value="PSII_PsbJ"/>
</dbReference>
<dbReference type="InterPro" id="IPR037267">
    <property type="entry name" value="PSII_PsbJ_sf"/>
</dbReference>
<dbReference type="NCBIfam" id="NF002722">
    <property type="entry name" value="PRK02565.1"/>
    <property type="match status" value="1"/>
</dbReference>
<dbReference type="PANTHER" id="PTHR34812">
    <property type="entry name" value="PHOTOSYSTEM II REACTION CENTER PROTEIN J"/>
    <property type="match status" value="1"/>
</dbReference>
<dbReference type="PANTHER" id="PTHR34812:SF3">
    <property type="entry name" value="PHOTOSYSTEM II REACTION CENTER PROTEIN J"/>
    <property type="match status" value="1"/>
</dbReference>
<dbReference type="Pfam" id="PF01788">
    <property type="entry name" value="PsbJ"/>
    <property type="match status" value="1"/>
</dbReference>
<dbReference type="SUPFAM" id="SSF161021">
    <property type="entry name" value="Photosystem II reaction center protein J, PsbJ"/>
    <property type="match status" value="1"/>
</dbReference>
<geneLocation type="chloroplast"/>
<gene>
    <name evidence="1" type="primary">psbJ</name>
</gene>
<evidence type="ECO:0000255" key="1">
    <source>
        <dbReference type="HAMAP-Rule" id="MF_01305"/>
    </source>
</evidence>
<evidence type="ECO:0000269" key="2">
    <source>
    </source>
</evidence>
<accession>Q85FK8</accession>
<feature type="chain" id="PRO_0000216576" description="Photosystem II reaction center protein J">
    <location>
        <begin position="1"/>
        <end position="40"/>
    </location>
</feature>
<feature type="transmembrane region" description="Helical" evidence="1">
    <location>
        <begin position="10"/>
        <end position="30"/>
    </location>
</feature>
<sequence length="40" mass="4090">MTNTTGRVPLWLVGTVAGTLVIGLLGVFFYGAYSGLGSSL</sequence>
<comment type="function">
    <text evidence="1">One of the components of the core complex of photosystem II (PSII). PSII is a light-driven water:plastoquinone oxidoreductase that uses light energy to abstract electrons from H(2)O, generating O(2) and a proton gradient subsequently used for ATP formation. It consists of a core antenna complex that captures photons, and an electron transfer chain that converts photonic excitation into a charge separation.</text>
</comment>
<comment type="subunit">
    <text evidence="1">PSII is composed of 1 copy each of membrane proteins PsbA, PsbB, PsbC, PsbD, PsbE, PsbF, PsbH, PsbI, PsbJ, PsbK, PsbL, PsbM, PsbT, PsbX, PsbY, PsbZ, Psb30/Ycf12, at least 3 peripheral proteins of the oxygen-evolving complex and a large number of cofactors. It forms dimeric complexes.</text>
</comment>
<comment type="subcellular location">
    <subcellularLocation>
        <location evidence="1">Plastid</location>
        <location evidence="1">Chloroplast thylakoid membrane</location>
        <topology evidence="1">Single-pass membrane protein</topology>
    </subcellularLocation>
</comment>
<comment type="RNA editing">
    <location>
        <position position="11" evidence="2"/>
    </location>
    <location>
        <position position="25" evidence="2"/>
    </location>
</comment>
<comment type="similarity">
    <text evidence="1">Belongs to the PsbJ family.</text>
</comment>
<reference key="1">
    <citation type="journal article" date="2003" name="DNA Res.">
        <title>Complete nucleotide sequence of the chloroplast genome from a leptosporangiate fern, Adiantum capillus-veneris L.</title>
        <authorList>
            <person name="Wolf P.G."/>
            <person name="Rowe C.A."/>
            <person name="Sinclair R.B."/>
            <person name="Hasebe M."/>
        </authorList>
    </citation>
    <scope>NUCLEOTIDE SEQUENCE [LARGE SCALE GENOMIC DNA]</scope>
</reference>
<reference key="2">
    <citation type="journal article" date="2004" name="Gene">
        <title>High levels of RNA editing in a vascular plant chloroplast genome: analysis of transcripts from the fern Adiantum capillus-veneris.</title>
        <authorList>
            <person name="Wolf P.G."/>
            <person name="Rowe C.A."/>
            <person name="Hasebe M."/>
        </authorList>
    </citation>
    <scope>NUCLEOTIDE SEQUENCE [GENOMIC DNA]</scope>
    <scope>RNA EDITING</scope>
    <source>
        <tissue>Frond</tissue>
    </source>
</reference>
<protein>
    <recommendedName>
        <fullName evidence="1">Photosystem II reaction center protein J</fullName>
        <shortName evidence="1">PSII-J</shortName>
    </recommendedName>
</protein>
<organism>
    <name type="scientific">Adiantum capillus-veneris</name>
    <name type="common">Maidenhair fern</name>
    <dbReference type="NCBI Taxonomy" id="13818"/>
    <lineage>
        <taxon>Eukaryota</taxon>
        <taxon>Viridiplantae</taxon>
        <taxon>Streptophyta</taxon>
        <taxon>Embryophyta</taxon>
        <taxon>Tracheophyta</taxon>
        <taxon>Polypodiopsida</taxon>
        <taxon>Polypodiidae</taxon>
        <taxon>Polypodiales</taxon>
        <taxon>Pteridineae</taxon>
        <taxon>Pteridaceae</taxon>
        <taxon>Vittarioideae</taxon>
        <taxon>Adiantum</taxon>
    </lineage>
</organism>
<proteinExistence type="evidence at transcript level"/>
<keyword id="KW-0150">Chloroplast</keyword>
<keyword id="KW-0472">Membrane</keyword>
<keyword id="KW-0602">Photosynthesis</keyword>
<keyword id="KW-0604">Photosystem II</keyword>
<keyword id="KW-0934">Plastid</keyword>
<keyword id="KW-0674">Reaction center</keyword>
<keyword id="KW-0691">RNA editing</keyword>
<keyword id="KW-0793">Thylakoid</keyword>
<keyword id="KW-0812">Transmembrane</keyword>
<keyword id="KW-1133">Transmembrane helix</keyword>
<name>PSBJ_ADICA</name>